<gene>
    <name type="primary">znf143</name>
    <name type="synonym">staf</name>
    <name type="ORF">si:dkey-8l13.2</name>
    <name type="ORF">zgc:66276</name>
</gene>
<name>ZN143_DANRE</name>
<dbReference type="EMBL" id="AY331976">
    <property type="protein sequence ID" value="AAQ94617.1"/>
    <property type="molecule type" value="mRNA"/>
</dbReference>
<dbReference type="EMBL" id="BX005395">
    <property type="protein sequence ID" value="CAK11243.1"/>
    <property type="status" value="ALT_INIT"/>
    <property type="molecule type" value="Genomic_DNA"/>
</dbReference>
<dbReference type="EMBL" id="BC124735">
    <property type="protein sequence ID" value="AAI24736.1"/>
    <property type="molecule type" value="mRNA"/>
</dbReference>
<dbReference type="RefSeq" id="XP_005159129.1">
    <property type="nucleotide sequence ID" value="XM_005159072.3"/>
</dbReference>
<dbReference type="RefSeq" id="XP_009291820.1">
    <property type="nucleotide sequence ID" value="XM_009293545.2"/>
</dbReference>
<dbReference type="RefSeq" id="XP_017207398.1">
    <property type="nucleotide sequence ID" value="XM_017351909.1"/>
</dbReference>
<dbReference type="SMR" id="Q1LYE3"/>
<dbReference type="FunCoup" id="Q1LYE3">
    <property type="interactions" value="2281"/>
</dbReference>
<dbReference type="STRING" id="7955.ENSDARP00000122626"/>
<dbReference type="PaxDb" id="7955-ENSDARP00000107422"/>
<dbReference type="Ensembl" id="ENSDART00000022640">
    <property type="protein sequence ID" value="ENSDARP00000009795"/>
    <property type="gene ID" value="ENSDARG00000041581"/>
</dbReference>
<dbReference type="Ensembl" id="ENSDART00000187799">
    <property type="protein sequence ID" value="ENSDARP00000148129"/>
    <property type="gene ID" value="ENSDARG00000112408"/>
</dbReference>
<dbReference type="Ensembl" id="ENSDART00000190974">
    <property type="protein sequence ID" value="ENSDARP00000154229"/>
    <property type="gene ID" value="ENSDARG00000111018"/>
</dbReference>
<dbReference type="GeneID" id="393954"/>
<dbReference type="AGR" id="ZFIN:ZDB-GENE-040426-1586"/>
<dbReference type="CTD" id="393954"/>
<dbReference type="ZFIN" id="ZDB-GENE-040426-1586">
    <property type="gene designation" value="znf143b"/>
</dbReference>
<dbReference type="eggNOG" id="KOG1721">
    <property type="taxonomic scope" value="Eukaryota"/>
</dbReference>
<dbReference type="InParanoid" id="Q1LYE3"/>
<dbReference type="OMA" id="FPALMHG"/>
<dbReference type="OrthoDB" id="6077919at2759"/>
<dbReference type="PhylomeDB" id="Q1LYE3"/>
<dbReference type="PRO" id="PR:Q1LYE3"/>
<dbReference type="Proteomes" id="UP000000437">
    <property type="component" value="Chromosome 18"/>
</dbReference>
<dbReference type="Bgee" id="ENSDARG00000041581">
    <property type="expression patterns" value="Expressed in tail and 23 other cell types or tissues"/>
</dbReference>
<dbReference type="ExpressionAtlas" id="Q1LYE3">
    <property type="expression patterns" value="baseline"/>
</dbReference>
<dbReference type="GO" id="GO:0005634">
    <property type="term" value="C:nucleus"/>
    <property type="evidence" value="ECO:0000318"/>
    <property type="project" value="GO_Central"/>
</dbReference>
<dbReference type="GO" id="GO:0000981">
    <property type="term" value="F:DNA-binding transcription factor activity, RNA polymerase II-specific"/>
    <property type="evidence" value="ECO:0000318"/>
    <property type="project" value="GO_Central"/>
</dbReference>
<dbReference type="GO" id="GO:0000978">
    <property type="term" value="F:RNA polymerase II cis-regulatory region sequence-specific DNA binding"/>
    <property type="evidence" value="ECO:0000318"/>
    <property type="project" value="GO_Central"/>
</dbReference>
<dbReference type="GO" id="GO:0008270">
    <property type="term" value="F:zinc ion binding"/>
    <property type="evidence" value="ECO:0007669"/>
    <property type="project" value="UniProtKB-KW"/>
</dbReference>
<dbReference type="GO" id="GO:0045893">
    <property type="term" value="P:positive regulation of DNA-templated transcription"/>
    <property type="evidence" value="ECO:0000314"/>
    <property type="project" value="ZFIN"/>
</dbReference>
<dbReference type="GO" id="GO:0061035">
    <property type="term" value="P:regulation of cartilage development"/>
    <property type="evidence" value="ECO:0000315"/>
    <property type="project" value="ZFIN"/>
</dbReference>
<dbReference type="GO" id="GO:0006357">
    <property type="term" value="P:regulation of transcription by RNA polymerase II"/>
    <property type="evidence" value="ECO:0000318"/>
    <property type="project" value="GO_Central"/>
</dbReference>
<dbReference type="FunFam" id="3.30.160.60:FF:000071">
    <property type="entry name" value="Putative zinc finger protein 143"/>
    <property type="match status" value="1"/>
</dbReference>
<dbReference type="FunFam" id="3.30.160.60:FF:000125">
    <property type="entry name" value="Putative zinc finger protein 143"/>
    <property type="match status" value="1"/>
</dbReference>
<dbReference type="FunFam" id="3.30.160.60:FF:000137">
    <property type="entry name" value="Putative zinc finger protein 143"/>
    <property type="match status" value="1"/>
</dbReference>
<dbReference type="FunFam" id="3.30.160.60:FF:000142">
    <property type="entry name" value="Putative zinc finger protein 143"/>
    <property type="match status" value="1"/>
</dbReference>
<dbReference type="FunFam" id="3.30.160.60:FF:000072">
    <property type="entry name" value="zinc finger protein 143 isoform X1"/>
    <property type="match status" value="1"/>
</dbReference>
<dbReference type="FunFam" id="3.30.160.60:FF:000236">
    <property type="entry name" value="zinc finger protein 143 isoform X1"/>
    <property type="match status" value="1"/>
</dbReference>
<dbReference type="FunFam" id="3.30.160.60:FF:000149">
    <property type="entry name" value="Zinc finger protein 569"/>
    <property type="match status" value="1"/>
</dbReference>
<dbReference type="Gene3D" id="3.30.160.60">
    <property type="entry name" value="Classic Zinc Finger"/>
    <property type="match status" value="7"/>
</dbReference>
<dbReference type="InterPro" id="IPR036236">
    <property type="entry name" value="Znf_C2H2_sf"/>
</dbReference>
<dbReference type="InterPro" id="IPR013087">
    <property type="entry name" value="Znf_C2H2_type"/>
</dbReference>
<dbReference type="PANTHER" id="PTHR23235">
    <property type="entry name" value="KRUEPPEL-LIKE TRANSCRIPTION FACTOR"/>
    <property type="match status" value="1"/>
</dbReference>
<dbReference type="PANTHER" id="PTHR23235:SF142">
    <property type="entry name" value="ZINC FINGER PROTEIN 384"/>
    <property type="match status" value="1"/>
</dbReference>
<dbReference type="Pfam" id="PF00096">
    <property type="entry name" value="zf-C2H2"/>
    <property type="match status" value="5"/>
</dbReference>
<dbReference type="SMART" id="SM00355">
    <property type="entry name" value="ZnF_C2H2"/>
    <property type="match status" value="7"/>
</dbReference>
<dbReference type="SUPFAM" id="SSF57667">
    <property type="entry name" value="beta-beta-alpha zinc fingers"/>
    <property type="match status" value="3"/>
</dbReference>
<dbReference type="PROSITE" id="PS00028">
    <property type="entry name" value="ZINC_FINGER_C2H2_1"/>
    <property type="match status" value="7"/>
</dbReference>
<dbReference type="PROSITE" id="PS50157">
    <property type="entry name" value="ZINC_FINGER_C2H2_2"/>
    <property type="match status" value="7"/>
</dbReference>
<sequence>MLLAQVNRDTQGMEFQSVDGDPQQVTLCLTEAVTVADDNIDGMDTVSLQAVTLVDGSTAYIQHSPKVSLTENKIMEGQVIQLEDGSAAYVQHLPMSKTGGEGLRLEDGQAVQLEDGTTAYIHAPKETYDQGGLQAVQLEDGTTAYIQHMPQSNTILAIQADGTVADLQTEGTIDAETISVLEQYSTKMEATECGTGLIGRGDSDGVHMQIVLQGQDCRSPRIQHVGEKAFRCEHEGCGKLYTTAHHLKVHERSHTGDKPYICDHLGCGKKFATGYGLKSHVRTHTGEKPYRCQELNCLKSFKTSGDLQKHTRTHTGEKPFKCPFEGCGRSFTTSNIRKVHIRTHTGERPYYCAEPNCGRAFASATNYKNHMRIHTGEKPYVCTVPGCDKRFTEYSSLYKHHVVHTPCKPYNCNHCGKTYKQISTLAMHKRTAHNDTEPIEEEQEGYFEPPAEAIDDPGLMYTPSVVDDDSGSEQVSGSEIMGQHHVALISQDGTQQVLSQADMQAMGGTITMVTQEGTTITIPAHEAMLSSGGAHSVTMVSADGTEGQVAIVTPDLAAYQTEEGELIQDQEQHEVSTSPHPVTLLATSNGTHIAVQLSDHPSLEEAIRIASRIQQGETPGMDD</sequence>
<proteinExistence type="evidence at transcript level"/>
<feature type="chain" id="PRO_0000370718" description="Zinc finger protein 143">
    <location>
        <begin position="1"/>
        <end position="623"/>
    </location>
</feature>
<feature type="zinc finger region" description="C2H2-type 1" evidence="2">
    <location>
        <begin position="230"/>
        <end position="254"/>
    </location>
</feature>
<feature type="zinc finger region" description="C2H2-type 2" evidence="2">
    <location>
        <begin position="260"/>
        <end position="284"/>
    </location>
</feature>
<feature type="zinc finger region" description="C2H2-type 3" evidence="2">
    <location>
        <begin position="290"/>
        <end position="314"/>
    </location>
</feature>
<feature type="zinc finger region" description="C2H2-type 4" evidence="2">
    <location>
        <begin position="320"/>
        <end position="344"/>
    </location>
</feature>
<feature type="zinc finger region" description="C2H2-type 5" evidence="2">
    <location>
        <begin position="350"/>
        <end position="374"/>
    </location>
</feature>
<feature type="zinc finger region" description="C2H2-type 6" evidence="2">
    <location>
        <begin position="380"/>
        <end position="404"/>
    </location>
</feature>
<feature type="zinc finger region" description="C2H2-type 7" evidence="2">
    <location>
        <begin position="410"/>
        <end position="433"/>
    </location>
</feature>
<feature type="sequence conflict" description="In Ref. 3; AAI24736." evidence="3" ref="3">
    <original>I</original>
    <variation>T</variation>
    <location>
        <position position="121"/>
    </location>
</feature>
<feature type="sequence conflict" description="In Ref. 1; AAQ94617." evidence="3" ref="1">
    <original>I</original>
    <variation>K</variation>
    <location>
        <position position="593"/>
    </location>
</feature>
<reference key="1">
    <citation type="journal article" date="2004" name="Gene">
        <title>Characterization of snRNA and snRNA-type genes in the pufferfish Fugu rubripes.</title>
        <authorList>
            <person name="Myslinski E."/>
            <person name="Krol A."/>
            <person name="Carbon P."/>
        </authorList>
    </citation>
    <scope>NUCLEOTIDE SEQUENCE [MRNA]</scope>
</reference>
<reference key="2">
    <citation type="journal article" date="2013" name="Nature">
        <title>The zebrafish reference genome sequence and its relationship to the human genome.</title>
        <authorList>
            <person name="Howe K."/>
            <person name="Clark M.D."/>
            <person name="Torroja C.F."/>
            <person name="Torrance J."/>
            <person name="Berthelot C."/>
            <person name="Muffato M."/>
            <person name="Collins J.E."/>
            <person name="Humphray S."/>
            <person name="McLaren K."/>
            <person name="Matthews L."/>
            <person name="McLaren S."/>
            <person name="Sealy I."/>
            <person name="Caccamo M."/>
            <person name="Churcher C."/>
            <person name="Scott C."/>
            <person name="Barrett J.C."/>
            <person name="Koch R."/>
            <person name="Rauch G.J."/>
            <person name="White S."/>
            <person name="Chow W."/>
            <person name="Kilian B."/>
            <person name="Quintais L.T."/>
            <person name="Guerra-Assuncao J.A."/>
            <person name="Zhou Y."/>
            <person name="Gu Y."/>
            <person name="Yen J."/>
            <person name="Vogel J.H."/>
            <person name="Eyre T."/>
            <person name="Redmond S."/>
            <person name="Banerjee R."/>
            <person name="Chi J."/>
            <person name="Fu B."/>
            <person name="Langley E."/>
            <person name="Maguire S.F."/>
            <person name="Laird G.K."/>
            <person name="Lloyd D."/>
            <person name="Kenyon E."/>
            <person name="Donaldson S."/>
            <person name="Sehra H."/>
            <person name="Almeida-King J."/>
            <person name="Loveland J."/>
            <person name="Trevanion S."/>
            <person name="Jones M."/>
            <person name="Quail M."/>
            <person name="Willey D."/>
            <person name="Hunt A."/>
            <person name="Burton J."/>
            <person name="Sims S."/>
            <person name="McLay K."/>
            <person name="Plumb B."/>
            <person name="Davis J."/>
            <person name="Clee C."/>
            <person name="Oliver K."/>
            <person name="Clark R."/>
            <person name="Riddle C."/>
            <person name="Elliot D."/>
            <person name="Threadgold G."/>
            <person name="Harden G."/>
            <person name="Ware D."/>
            <person name="Begum S."/>
            <person name="Mortimore B."/>
            <person name="Kerry G."/>
            <person name="Heath P."/>
            <person name="Phillimore B."/>
            <person name="Tracey A."/>
            <person name="Corby N."/>
            <person name="Dunn M."/>
            <person name="Johnson C."/>
            <person name="Wood J."/>
            <person name="Clark S."/>
            <person name="Pelan S."/>
            <person name="Griffiths G."/>
            <person name="Smith M."/>
            <person name="Glithero R."/>
            <person name="Howden P."/>
            <person name="Barker N."/>
            <person name="Lloyd C."/>
            <person name="Stevens C."/>
            <person name="Harley J."/>
            <person name="Holt K."/>
            <person name="Panagiotidis G."/>
            <person name="Lovell J."/>
            <person name="Beasley H."/>
            <person name="Henderson C."/>
            <person name="Gordon D."/>
            <person name="Auger K."/>
            <person name="Wright D."/>
            <person name="Collins J."/>
            <person name="Raisen C."/>
            <person name="Dyer L."/>
            <person name="Leung K."/>
            <person name="Robertson L."/>
            <person name="Ambridge K."/>
            <person name="Leongamornlert D."/>
            <person name="McGuire S."/>
            <person name="Gilderthorp R."/>
            <person name="Griffiths C."/>
            <person name="Manthravadi D."/>
            <person name="Nichol S."/>
            <person name="Barker G."/>
            <person name="Whitehead S."/>
            <person name="Kay M."/>
            <person name="Brown J."/>
            <person name="Murnane C."/>
            <person name="Gray E."/>
            <person name="Humphries M."/>
            <person name="Sycamore N."/>
            <person name="Barker D."/>
            <person name="Saunders D."/>
            <person name="Wallis J."/>
            <person name="Babbage A."/>
            <person name="Hammond S."/>
            <person name="Mashreghi-Mohammadi M."/>
            <person name="Barr L."/>
            <person name="Martin S."/>
            <person name="Wray P."/>
            <person name="Ellington A."/>
            <person name="Matthews N."/>
            <person name="Ellwood M."/>
            <person name="Woodmansey R."/>
            <person name="Clark G."/>
            <person name="Cooper J."/>
            <person name="Tromans A."/>
            <person name="Grafham D."/>
            <person name="Skuce C."/>
            <person name="Pandian R."/>
            <person name="Andrews R."/>
            <person name="Harrison E."/>
            <person name="Kimberley A."/>
            <person name="Garnett J."/>
            <person name="Fosker N."/>
            <person name="Hall R."/>
            <person name="Garner P."/>
            <person name="Kelly D."/>
            <person name="Bird C."/>
            <person name="Palmer S."/>
            <person name="Gehring I."/>
            <person name="Berger A."/>
            <person name="Dooley C.M."/>
            <person name="Ersan-Urun Z."/>
            <person name="Eser C."/>
            <person name="Geiger H."/>
            <person name="Geisler M."/>
            <person name="Karotki L."/>
            <person name="Kirn A."/>
            <person name="Konantz J."/>
            <person name="Konantz M."/>
            <person name="Oberlander M."/>
            <person name="Rudolph-Geiger S."/>
            <person name="Teucke M."/>
            <person name="Lanz C."/>
            <person name="Raddatz G."/>
            <person name="Osoegawa K."/>
            <person name="Zhu B."/>
            <person name="Rapp A."/>
            <person name="Widaa S."/>
            <person name="Langford C."/>
            <person name="Yang F."/>
            <person name="Schuster S.C."/>
            <person name="Carter N.P."/>
            <person name="Harrow J."/>
            <person name="Ning Z."/>
            <person name="Herrero J."/>
            <person name="Searle S.M."/>
            <person name="Enright A."/>
            <person name="Geisler R."/>
            <person name="Plasterk R.H."/>
            <person name="Lee C."/>
            <person name="Westerfield M."/>
            <person name="de Jong P.J."/>
            <person name="Zon L.I."/>
            <person name="Postlethwait J.H."/>
            <person name="Nusslein-Volhard C."/>
            <person name="Hubbard T.J."/>
            <person name="Roest Crollius H."/>
            <person name="Rogers J."/>
            <person name="Stemple D.L."/>
        </authorList>
    </citation>
    <scope>NUCLEOTIDE SEQUENCE [LARGE SCALE GENOMIC DNA]</scope>
    <source>
        <strain>Tuebingen</strain>
    </source>
</reference>
<reference key="3">
    <citation type="submission" date="2006-10" db="EMBL/GenBank/DDBJ databases">
        <authorList>
            <consortium name="NIH - Zebrafish Gene Collection (ZGC) project"/>
        </authorList>
    </citation>
    <scope>NUCLEOTIDE SEQUENCE [LARGE SCALE MRNA]</scope>
    <source>
        <tissue>Olfactory epithelium</tissue>
    </source>
</reference>
<protein>
    <recommendedName>
        <fullName>Zinc finger protein 143</fullName>
    </recommendedName>
    <alternativeName>
        <fullName>Selenocysteine tRNA gene transcription-activating factor</fullName>
    </alternativeName>
</protein>
<organism>
    <name type="scientific">Danio rerio</name>
    <name type="common">Zebrafish</name>
    <name type="synonym">Brachydanio rerio</name>
    <dbReference type="NCBI Taxonomy" id="7955"/>
    <lineage>
        <taxon>Eukaryota</taxon>
        <taxon>Metazoa</taxon>
        <taxon>Chordata</taxon>
        <taxon>Craniata</taxon>
        <taxon>Vertebrata</taxon>
        <taxon>Euteleostomi</taxon>
        <taxon>Actinopterygii</taxon>
        <taxon>Neopterygii</taxon>
        <taxon>Teleostei</taxon>
        <taxon>Ostariophysi</taxon>
        <taxon>Cypriniformes</taxon>
        <taxon>Danionidae</taxon>
        <taxon>Danioninae</taxon>
        <taxon>Danio</taxon>
    </lineage>
</organism>
<accession>Q1LYE3</accession>
<accession>A0AUQ7</accession>
<accession>Q6VQB1</accession>
<keyword id="KW-0010">Activator</keyword>
<keyword id="KW-0238">DNA-binding</keyword>
<keyword id="KW-0479">Metal-binding</keyword>
<keyword id="KW-0539">Nucleus</keyword>
<keyword id="KW-1185">Reference proteome</keyword>
<keyword id="KW-0677">Repeat</keyword>
<keyword id="KW-0804">Transcription</keyword>
<keyword id="KW-0805">Transcription regulation</keyword>
<keyword id="KW-0862">Zinc</keyword>
<keyword id="KW-0863">Zinc-finger</keyword>
<comment type="function">
    <text evidence="1">Transcriptional activator. Activates the gene for selenocysteine tRNA (tRNAsec). Binds to the activator element (AE) motif of the selenocysteine tRNA gene promoter (By similarity).</text>
</comment>
<comment type="subcellular location">
    <subcellularLocation>
        <location evidence="3">Nucleus</location>
    </subcellularLocation>
</comment>
<comment type="similarity">
    <text evidence="3">Belongs to the GLI C2H2-type zinc-finger protein family.</text>
</comment>
<comment type="sequence caution" evidence="3">
    <conflict type="erroneous initiation">
        <sequence resource="EMBL-CDS" id="CAK11243"/>
    </conflict>
</comment>
<evidence type="ECO:0000250" key="1"/>
<evidence type="ECO:0000255" key="2">
    <source>
        <dbReference type="PROSITE-ProRule" id="PRU00042"/>
    </source>
</evidence>
<evidence type="ECO:0000305" key="3"/>